<organism>
    <name type="scientific">Escherichia coli O157:H7</name>
    <dbReference type="NCBI Taxonomy" id="83334"/>
    <lineage>
        <taxon>Bacteria</taxon>
        <taxon>Pseudomonadati</taxon>
        <taxon>Pseudomonadota</taxon>
        <taxon>Gammaproteobacteria</taxon>
        <taxon>Enterobacterales</taxon>
        <taxon>Enterobacteriaceae</taxon>
        <taxon>Escherichia</taxon>
    </lineage>
</organism>
<dbReference type="EC" id="2.3.1.269" evidence="1"/>
<dbReference type="EMBL" id="AE005174">
    <property type="protein sequence ID" value="AAG54990.1"/>
    <property type="molecule type" value="Genomic_DNA"/>
</dbReference>
<dbReference type="EMBL" id="BA000007">
    <property type="protein sequence ID" value="BAB34118.1"/>
    <property type="molecule type" value="Genomic_DNA"/>
</dbReference>
<dbReference type="PIR" id="B85566">
    <property type="entry name" value="B85566"/>
</dbReference>
<dbReference type="PIR" id="G90715">
    <property type="entry name" value="G90715"/>
</dbReference>
<dbReference type="RefSeq" id="NP_308722.1">
    <property type="nucleotide sequence ID" value="NC_002695.1"/>
</dbReference>
<dbReference type="RefSeq" id="WP_000853048.1">
    <property type="nucleotide sequence ID" value="NZ_VOAI01000012.1"/>
</dbReference>
<dbReference type="SMR" id="Q8XBK2"/>
<dbReference type="STRING" id="155864.Z0806"/>
<dbReference type="GeneID" id="917056"/>
<dbReference type="KEGG" id="ece:Z0806"/>
<dbReference type="KEGG" id="ecs:ECs_0695"/>
<dbReference type="PATRIC" id="fig|386585.9.peg.809"/>
<dbReference type="eggNOG" id="COG0815">
    <property type="taxonomic scope" value="Bacteria"/>
</dbReference>
<dbReference type="HOGENOM" id="CLU_019563_3_0_6"/>
<dbReference type="OMA" id="YVALVPW"/>
<dbReference type="UniPathway" id="UPA00666"/>
<dbReference type="Proteomes" id="UP000000558">
    <property type="component" value="Chromosome"/>
</dbReference>
<dbReference type="Proteomes" id="UP000002519">
    <property type="component" value="Chromosome"/>
</dbReference>
<dbReference type="GO" id="GO:0005886">
    <property type="term" value="C:plasma membrane"/>
    <property type="evidence" value="ECO:0007669"/>
    <property type="project" value="UniProtKB-SubCell"/>
</dbReference>
<dbReference type="GO" id="GO:0016410">
    <property type="term" value="F:N-acyltransferase activity"/>
    <property type="evidence" value="ECO:0007669"/>
    <property type="project" value="UniProtKB-UniRule"/>
</dbReference>
<dbReference type="GO" id="GO:0042158">
    <property type="term" value="P:lipoprotein biosynthetic process"/>
    <property type="evidence" value="ECO:0007669"/>
    <property type="project" value="UniProtKB-UniRule"/>
</dbReference>
<dbReference type="CDD" id="cd07571">
    <property type="entry name" value="ALP_N-acyl_transferase"/>
    <property type="match status" value="1"/>
</dbReference>
<dbReference type="FunFam" id="3.60.110.10:FF:000015">
    <property type="entry name" value="Apolipoprotein N-acyltransferase"/>
    <property type="match status" value="1"/>
</dbReference>
<dbReference type="Gene3D" id="3.60.110.10">
    <property type="entry name" value="Carbon-nitrogen hydrolase"/>
    <property type="match status" value="1"/>
</dbReference>
<dbReference type="HAMAP" id="MF_01148">
    <property type="entry name" value="Lnt"/>
    <property type="match status" value="1"/>
</dbReference>
<dbReference type="InterPro" id="IPR004563">
    <property type="entry name" value="Apolipo_AcylTrfase"/>
</dbReference>
<dbReference type="InterPro" id="IPR003010">
    <property type="entry name" value="C-N_Hydrolase"/>
</dbReference>
<dbReference type="InterPro" id="IPR036526">
    <property type="entry name" value="C-N_Hydrolase_sf"/>
</dbReference>
<dbReference type="InterPro" id="IPR045378">
    <property type="entry name" value="LNT_N"/>
</dbReference>
<dbReference type="NCBIfam" id="TIGR00546">
    <property type="entry name" value="lnt"/>
    <property type="match status" value="1"/>
</dbReference>
<dbReference type="PANTHER" id="PTHR38686">
    <property type="entry name" value="APOLIPOPROTEIN N-ACYLTRANSFERASE"/>
    <property type="match status" value="1"/>
</dbReference>
<dbReference type="PANTHER" id="PTHR38686:SF1">
    <property type="entry name" value="APOLIPOPROTEIN N-ACYLTRANSFERASE"/>
    <property type="match status" value="1"/>
</dbReference>
<dbReference type="Pfam" id="PF00795">
    <property type="entry name" value="CN_hydrolase"/>
    <property type="match status" value="1"/>
</dbReference>
<dbReference type="Pfam" id="PF20154">
    <property type="entry name" value="LNT_N"/>
    <property type="match status" value="1"/>
</dbReference>
<dbReference type="SUPFAM" id="SSF56317">
    <property type="entry name" value="Carbon-nitrogen hydrolase"/>
    <property type="match status" value="1"/>
</dbReference>
<dbReference type="PROSITE" id="PS50263">
    <property type="entry name" value="CN_HYDROLASE"/>
    <property type="match status" value="1"/>
</dbReference>
<proteinExistence type="inferred from homology"/>
<reference key="1">
    <citation type="journal article" date="2001" name="Nature">
        <title>Genome sequence of enterohaemorrhagic Escherichia coli O157:H7.</title>
        <authorList>
            <person name="Perna N.T."/>
            <person name="Plunkett G. III"/>
            <person name="Burland V."/>
            <person name="Mau B."/>
            <person name="Glasner J.D."/>
            <person name="Rose D.J."/>
            <person name="Mayhew G.F."/>
            <person name="Evans P.S."/>
            <person name="Gregor J."/>
            <person name="Kirkpatrick H.A."/>
            <person name="Posfai G."/>
            <person name="Hackett J."/>
            <person name="Klink S."/>
            <person name="Boutin A."/>
            <person name="Shao Y."/>
            <person name="Miller L."/>
            <person name="Grotbeck E.J."/>
            <person name="Davis N.W."/>
            <person name="Lim A."/>
            <person name="Dimalanta E.T."/>
            <person name="Potamousis K."/>
            <person name="Apodaca J."/>
            <person name="Anantharaman T.S."/>
            <person name="Lin J."/>
            <person name="Yen G."/>
            <person name="Schwartz D.C."/>
            <person name="Welch R.A."/>
            <person name="Blattner F.R."/>
        </authorList>
    </citation>
    <scope>NUCLEOTIDE SEQUENCE [LARGE SCALE GENOMIC DNA]</scope>
    <source>
        <strain>O157:H7 / EDL933 / ATCC 700927 / EHEC</strain>
    </source>
</reference>
<reference key="2">
    <citation type="journal article" date="2001" name="DNA Res.">
        <title>Complete genome sequence of enterohemorrhagic Escherichia coli O157:H7 and genomic comparison with a laboratory strain K-12.</title>
        <authorList>
            <person name="Hayashi T."/>
            <person name="Makino K."/>
            <person name="Ohnishi M."/>
            <person name="Kurokawa K."/>
            <person name="Ishii K."/>
            <person name="Yokoyama K."/>
            <person name="Han C.-G."/>
            <person name="Ohtsubo E."/>
            <person name="Nakayama K."/>
            <person name="Murata T."/>
            <person name="Tanaka M."/>
            <person name="Tobe T."/>
            <person name="Iida T."/>
            <person name="Takami H."/>
            <person name="Honda T."/>
            <person name="Sasakawa C."/>
            <person name="Ogasawara N."/>
            <person name="Yasunaga T."/>
            <person name="Kuhara S."/>
            <person name="Shiba T."/>
            <person name="Hattori M."/>
            <person name="Shinagawa H."/>
        </authorList>
    </citation>
    <scope>NUCLEOTIDE SEQUENCE [LARGE SCALE GENOMIC DNA]</scope>
    <source>
        <strain>O157:H7 / Sakai / RIMD 0509952 / EHEC</strain>
    </source>
</reference>
<keyword id="KW-0012">Acyltransferase</keyword>
<keyword id="KW-0997">Cell inner membrane</keyword>
<keyword id="KW-1003">Cell membrane</keyword>
<keyword id="KW-0472">Membrane</keyword>
<keyword id="KW-1185">Reference proteome</keyword>
<keyword id="KW-0808">Transferase</keyword>
<keyword id="KW-0812">Transmembrane</keyword>
<keyword id="KW-1133">Transmembrane helix</keyword>
<protein>
    <recommendedName>
        <fullName evidence="1">Apolipoprotein N-acyltransferase</fullName>
        <shortName evidence="1">ALP N-acyltransferase</shortName>
        <ecNumber evidence="1">2.3.1.269</ecNumber>
    </recommendedName>
    <alternativeName>
        <fullName>Copper homeostasis protein CutE</fullName>
    </alternativeName>
</protein>
<feature type="chain" id="PRO_0000178063" description="Apolipoprotein N-acyltransferase">
    <location>
        <begin position="1"/>
        <end position="512"/>
    </location>
</feature>
<feature type="transmembrane region" description="Helical" evidence="1">
    <location>
        <begin position="14"/>
        <end position="34"/>
    </location>
</feature>
<feature type="transmembrane region" description="Helical" evidence="1">
    <location>
        <begin position="57"/>
        <end position="77"/>
    </location>
</feature>
<feature type="transmembrane region" description="Helical" evidence="1">
    <location>
        <begin position="91"/>
        <end position="111"/>
    </location>
</feature>
<feature type="transmembrane region" description="Helical" evidence="1">
    <location>
        <begin position="168"/>
        <end position="188"/>
    </location>
</feature>
<feature type="transmembrane region" description="Helical" evidence="1">
    <location>
        <begin position="194"/>
        <end position="214"/>
    </location>
</feature>
<feature type="transmembrane region" description="Helical" evidence="1">
    <location>
        <begin position="487"/>
        <end position="507"/>
    </location>
</feature>
<feature type="domain" description="CN hydrolase" evidence="1">
    <location>
        <begin position="227"/>
        <end position="476"/>
    </location>
</feature>
<feature type="active site" description="Proton acceptor" evidence="1">
    <location>
        <position position="267"/>
    </location>
</feature>
<feature type="active site" evidence="1">
    <location>
        <position position="335"/>
    </location>
</feature>
<feature type="active site" description="Nucleophile" evidence="1">
    <location>
        <position position="387"/>
    </location>
</feature>
<accession>Q8XBK2</accession>
<evidence type="ECO:0000255" key="1">
    <source>
        <dbReference type="HAMAP-Rule" id="MF_01148"/>
    </source>
</evidence>
<name>LNT_ECO57</name>
<gene>
    <name evidence="1" type="primary">lnt</name>
    <name type="synonym">cutE</name>
    <name type="ordered locus">Z0806</name>
    <name type="ordered locus">ECs0695</name>
</gene>
<sequence>MAFASLIERQRIRLLLALLFGACGTLAFSPYDVWPAAIISLMGLQALTFNRRPLQSAAIGFCWGFGLFGSGINWVYVSIATFGGMPGPVNIFLVVLLAAYLSLYTGLFAGVLSRLWPKTTWLRVAIAAPALWQVTEFLRGWVLTGFPWLQFGYSQIDGPLKGLAPLMGVEAINFLLMMVSGLLALALVKRNWRPLVVAVVLFALPFPLRYIRWFTPQPEKTIQVSMVQGDIPQSLKWDEGQLLNTLKIYYNATAPLMGKSSLIIWPESAITDLEINQQPFLKALDGELRDKGSSLVTGIVDARLNKQNRYDTYNTIITLGKGAPYSYESADRYNKNHLVPFGEFVPLESILRPLAPFFDLPMSSFSRGPYIQPPLSANGIELTAAICYEIILGEQVRDNFRPDTDYLLTISNDAWFGKSIGPWQHFQMARMRALELARPLLRSTNNGITAVIGPQGEIQAMIPQFTREVLTTNVTPTTGLTPYARTGNWPLWVLTALFGFAAVLMSLRQRRK</sequence>
<comment type="function">
    <text evidence="1">Catalyzes the phospholipid dependent N-acylation of the N-terminal cysteine of apolipoprotein, the last step in lipoprotein maturation.</text>
</comment>
<comment type="catalytic activity">
    <reaction evidence="1">
        <text>N-terminal S-1,2-diacyl-sn-glyceryl-L-cysteinyl-[lipoprotein] + a glycerophospholipid = N-acyl-S-1,2-diacyl-sn-glyceryl-L-cysteinyl-[lipoprotein] + a 2-acyl-sn-glycero-3-phospholipid + H(+)</text>
        <dbReference type="Rhea" id="RHEA:48228"/>
        <dbReference type="Rhea" id="RHEA-COMP:14681"/>
        <dbReference type="Rhea" id="RHEA-COMP:14684"/>
        <dbReference type="ChEBI" id="CHEBI:15378"/>
        <dbReference type="ChEBI" id="CHEBI:136912"/>
        <dbReference type="ChEBI" id="CHEBI:140656"/>
        <dbReference type="ChEBI" id="CHEBI:140657"/>
        <dbReference type="ChEBI" id="CHEBI:140660"/>
        <dbReference type="EC" id="2.3.1.269"/>
    </reaction>
</comment>
<comment type="pathway">
    <text evidence="1">Protein modification; lipoprotein biosynthesis (N-acyl transfer).</text>
</comment>
<comment type="subcellular location">
    <subcellularLocation>
        <location evidence="1">Cell inner membrane</location>
        <topology evidence="1">Multi-pass membrane protein</topology>
    </subcellularLocation>
</comment>
<comment type="similarity">
    <text evidence="1">Belongs to the CN hydrolase family. Apolipoprotein N-acyltransferase subfamily.</text>
</comment>